<organism>
    <name type="scientific">Thermodesulfovibrio yellowstonii (strain ATCC 51303 / DSM 11347 / YP87)</name>
    <dbReference type="NCBI Taxonomy" id="289376"/>
    <lineage>
        <taxon>Bacteria</taxon>
        <taxon>Pseudomonadati</taxon>
        <taxon>Nitrospirota</taxon>
        <taxon>Thermodesulfovibrionia</taxon>
        <taxon>Thermodesulfovibrionales</taxon>
        <taxon>Thermodesulfovibrionaceae</taxon>
        <taxon>Thermodesulfovibrio</taxon>
    </lineage>
</organism>
<comment type="function">
    <text evidence="1">Plays an essential role in the initiation and regulation of chromosomal replication. ATP-DnaA binds to the origin of replication (oriC) to initiate formation of the DNA replication initiation complex once per cell cycle. Binds the DnaA box (a 9 base pair repeat at the origin) and separates the double-stranded (ds)DNA. Forms a right-handed helical filament on oriC DNA; dsDNA binds to the exterior of the filament while single-stranded (ss)DNA is stabiized in the filament's interior. The ATP-DnaA-oriC complex binds and stabilizes one strand of the AT-rich DNA unwinding element (DUE), permitting loading of DNA polymerase. After initiation quickly degrades to an ADP-DnaA complex that is not apt for DNA replication. Binds acidic phospholipids.</text>
</comment>
<comment type="subunit">
    <text evidence="1">Oligomerizes as a right-handed, spiral filament on DNA at oriC.</text>
</comment>
<comment type="subcellular location">
    <subcellularLocation>
        <location evidence="1">Cytoplasm</location>
    </subcellularLocation>
</comment>
<comment type="domain">
    <text evidence="1">Domain I is involved in oligomerization and binding regulators, domain II is flexibile and of varying length in different bacteria, domain III forms the AAA+ region, while domain IV binds dsDNA.</text>
</comment>
<comment type="similarity">
    <text evidence="1">Belongs to the DnaA family.</text>
</comment>
<evidence type="ECO:0000255" key="1">
    <source>
        <dbReference type="HAMAP-Rule" id="MF_00377"/>
    </source>
</evidence>
<reference key="1">
    <citation type="submission" date="2008-08" db="EMBL/GenBank/DDBJ databases">
        <title>The complete genome sequence of Thermodesulfovibrio yellowstonii strain ATCC 51303 / DSM 11347 / YP87.</title>
        <authorList>
            <person name="Dodson R.J."/>
            <person name="Durkin A.S."/>
            <person name="Wu M."/>
            <person name="Eisen J."/>
            <person name="Sutton G."/>
        </authorList>
    </citation>
    <scope>NUCLEOTIDE SEQUENCE [LARGE SCALE GENOMIC DNA]</scope>
    <source>
        <strain>ATCC 51303 / DSM 11347 / YP87</strain>
    </source>
</reference>
<protein>
    <recommendedName>
        <fullName evidence="1">Chromosomal replication initiator protein DnaA</fullName>
    </recommendedName>
</protein>
<gene>
    <name evidence="1" type="primary">dnaA</name>
    <name type="ordered locus">THEYE_A0015</name>
</gene>
<name>DNAA_THEYD</name>
<dbReference type="EMBL" id="CP001147">
    <property type="protein sequence ID" value="ACI20356.1"/>
    <property type="molecule type" value="Genomic_DNA"/>
</dbReference>
<dbReference type="RefSeq" id="WP_012545093.1">
    <property type="nucleotide sequence ID" value="NC_011296.1"/>
</dbReference>
<dbReference type="RefSeq" id="YP_002247869.1">
    <property type="nucleotide sequence ID" value="NC_011296.1"/>
</dbReference>
<dbReference type="SMR" id="B5YGT9"/>
<dbReference type="FunCoup" id="B5YGT9">
    <property type="interactions" value="278"/>
</dbReference>
<dbReference type="STRING" id="289376.THEYE_A0015"/>
<dbReference type="EnsemblBacteria" id="ACI20356">
    <property type="protein sequence ID" value="ACI20356"/>
    <property type="gene ID" value="THEYE_A0015"/>
</dbReference>
<dbReference type="KEGG" id="tye:THEYE_A0015"/>
<dbReference type="PATRIC" id="fig|289376.4.peg.15"/>
<dbReference type="eggNOG" id="COG0593">
    <property type="taxonomic scope" value="Bacteria"/>
</dbReference>
<dbReference type="HOGENOM" id="CLU_026910_3_1_0"/>
<dbReference type="InParanoid" id="B5YGT9"/>
<dbReference type="OrthoDB" id="9807019at2"/>
<dbReference type="Proteomes" id="UP000000718">
    <property type="component" value="Chromosome"/>
</dbReference>
<dbReference type="GO" id="GO:0005737">
    <property type="term" value="C:cytoplasm"/>
    <property type="evidence" value="ECO:0007669"/>
    <property type="project" value="UniProtKB-SubCell"/>
</dbReference>
<dbReference type="GO" id="GO:0005886">
    <property type="term" value="C:plasma membrane"/>
    <property type="evidence" value="ECO:0000318"/>
    <property type="project" value="GO_Central"/>
</dbReference>
<dbReference type="GO" id="GO:0005524">
    <property type="term" value="F:ATP binding"/>
    <property type="evidence" value="ECO:0007669"/>
    <property type="project" value="UniProtKB-UniRule"/>
</dbReference>
<dbReference type="GO" id="GO:0016887">
    <property type="term" value="F:ATP hydrolysis activity"/>
    <property type="evidence" value="ECO:0007669"/>
    <property type="project" value="InterPro"/>
</dbReference>
<dbReference type="GO" id="GO:0003688">
    <property type="term" value="F:DNA replication origin binding"/>
    <property type="evidence" value="ECO:0000318"/>
    <property type="project" value="GO_Central"/>
</dbReference>
<dbReference type="GO" id="GO:0008289">
    <property type="term" value="F:lipid binding"/>
    <property type="evidence" value="ECO:0007669"/>
    <property type="project" value="UniProtKB-KW"/>
</dbReference>
<dbReference type="GO" id="GO:0006260">
    <property type="term" value="P:DNA replication"/>
    <property type="evidence" value="ECO:0000318"/>
    <property type="project" value="GO_Central"/>
</dbReference>
<dbReference type="GO" id="GO:0006270">
    <property type="term" value="P:DNA replication initiation"/>
    <property type="evidence" value="ECO:0000318"/>
    <property type="project" value="GO_Central"/>
</dbReference>
<dbReference type="GO" id="GO:0006275">
    <property type="term" value="P:regulation of DNA replication"/>
    <property type="evidence" value="ECO:0007669"/>
    <property type="project" value="UniProtKB-UniRule"/>
</dbReference>
<dbReference type="CDD" id="cd00009">
    <property type="entry name" value="AAA"/>
    <property type="match status" value="1"/>
</dbReference>
<dbReference type="CDD" id="cd06571">
    <property type="entry name" value="Bac_DnaA_C"/>
    <property type="match status" value="1"/>
</dbReference>
<dbReference type="FunFam" id="1.10.8.60:FF:000003">
    <property type="entry name" value="Chromosomal replication initiator protein DnaA"/>
    <property type="match status" value="1"/>
</dbReference>
<dbReference type="FunFam" id="3.40.50.300:FF:000150">
    <property type="entry name" value="Chromosomal replication initiator protein DnaA"/>
    <property type="match status" value="1"/>
</dbReference>
<dbReference type="Gene3D" id="1.10.1750.10">
    <property type="match status" value="1"/>
</dbReference>
<dbReference type="Gene3D" id="1.10.8.60">
    <property type="match status" value="1"/>
</dbReference>
<dbReference type="Gene3D" id="3.30.300.180">
    <property type="match status" value="1"/>
</dbReference>
<dbReference type="Gene3D" id="3.40.50.300">
    <property type="entry name" value="P-loop containing nucleotide triphosphate hydrolases"/>
    <property type="match status" value="1"/>
</dbReference>
<dbReference type="HAMAP" id="MF_00377">
    <property type="entry name" value="DnaA_bact"/>
    <property type="match status" value="1"/>
</dbReference>
<dbReference type="InterPro" id="IPR003593">
    <property type="entry name" value="AAA+_ATPase"/>
</dbReference>
<dbReference type="InterPro" id="IPR001957">
    <property type="entry name" value="Chromosome_initiator_DnaA"/>
</dbReference>
<dbReference type="InterPro" id="IPR020591">
    <property type="entry name" value="Chromosome_initiator_DnaA-like"/>
</dbReference>
<dbReference type="InterPro" id="IPR018312">
    <property type="entry name" value="Chromosome_initiator_DnaA_CS"/>
</dbReference>
<dbReference type="InterPro" id="IPR013159">
    <property type="entry name" value="DnaA_C"/>
</dbReference>
<dbReference type="InterPro" id="IPR013317">
    <property type="entry name" value="DnaA_dom"/>
</dbReference>
<dbReference type="InterPro" id="IPR024633">
    <property type="entry name" value="DnaA_N_dom"/>
</dbReference>
<dbReference type="InterPro" id="IPR038454">
    <property type="entry name" value="DnaA_N_sf"/>
</dbReference>
<dbReference type="InterPro" id="IPR027417">
    <property type="entry name" value="P-loop_NTPase"/>
</dbReference>
<dbReference type="InterPro" id="IPR010921">
    <property type="entry name" value="Trp_repressor/repl_initiator"/>
</dbReference>
<dbReference type="NCBIfam" id="TIGR00362">
    <property type="entry name" value="DnaA"/>
    <property type="match status" value="1"/>
</dbReference>
<dbReference type="PANTHER" id="PTHR30050">
    <property type="entry name" value="CHROMOSOMAL REPLICATION INITIATOR PROTEIN DNAA"/>
    <property type="match status" value="1"/>
</dbReference>
<dbReference type="PANTHER" id="PTHR30050:SF2">
    <property type="entry name" value="CHROMOSOMAL REPLICATION INITIATOR PROTEIN DNAA"/>
    <property type="match status" value="1"/>
</dbReference>
<dbReference type="Pfam" id="PF00308">
    <property type="entry name" value="Bac_DnaA"/>
    <property type="match status" value="1"/>
</dbReference>
<dbReference type="Pfam" id="PF08299">
    <property type="entry name" value="Bac_DnaA_C"/>
    <property type="match status" value="1"/>
</dbReference>
<dbReference type="Pfam" id="PF11638">
    <property type="entry name" value="DnaA_N"/>
    <property type="match status" value="1"/>
</dbReference>
<dbReference type="PRINTS" id="PR00051">
    <property type="entry name" value="DNAA"/>
</dbReference>
<dbReference type="SMART" id="SM00382">
    <property type="entry name" value="AAA"/>
    <property type="match status" value="1"/>
</dbReference>
<dbReference type="SMART" id="SM00760">
    <property type="entry name" value="Bac_DnaA_C"/>
    <property type="match status" value="1"/>
</dbReference>
<dbReference type="SUPFAM" id="SSF52540">
    <property type="entry name" value="P-loop containing nucleoside triphosphate hydrolases"/>
    <property type="match status" value="1"/>
</dbReference>
<dbReference type="SUPFAM" id="SSF48295">
    <property type="entry name" value="TrpR-like"/>
    <property type="match status" value="1"/>
</dbReference>
<dbReference type="PROSITE" id="PS01008">
    <property type="entry name" value="DNAA"/>
    <property type="match status" value="1"/>
</dbReference>
<keyword id="KW-0067">ATP-binding</keyword>
<keyword id="KW-0963">Cytoplasm</keyword>
<keyword id="KW-0235">DNA replication</keyword>
<keyword id="KW-0238">DNA-binding</keyword>
<keyword id="KW-0446">Lipid-binding</keyword>
<keyword id="KW-0547">Nucleotide-binding</keyword>
<keyword id="KW-1185">Reference proteome</keyword>
<accession>B5YGT9</accession>
<feature type="chain" id="PRO_1000205665" description="Chromosomal replication initiator protein DnaA">
    <location>
        <begin position="1"/>
        <end position="438"/>
    </location>
</feature>
<feature type="region of interest" description="Domain I, interacts with DnaA modulators" evidence="1">
    <location>
        <begin position="1"/>
        <end position="74"/>
    </location>
</feature>
<feature type="region of interest" description="Domain II" evidence="1">
    <location>
        <begin position="74"/>
        <end position="100"/>
    </location>
</feature>
<feature type="region of interest" description="Domain III, AAA+ region" evidence="1">
    <location>
        <begin position="101"/>
        <end position="317"/>
    </location>
</feature>
<feature type="region of interest" description="Domain IV, binds dsDNA" evidence="1">
    <location>
        <begin position="318"/>
        <end position="438"/>
    </location>
</feature>
<feature type="binding site" evidence="1">
    <location>
        <position position="145"/>
    </location>
    <ligand>
        <name>ATP</name>
        <dbReference type="ChEBI" id="CHEBI:30616"/>
    </ligand>
</feature>
<feature type="binding site" evidence="1">
    <location>
        <position position="147"/>
    </location>
    <ligand>
        <name>ATP</name>
        <dbReference type="ChEBI" id="CHEBI:30616"/>
    </ligand>
</feature>
<feature type="binding site" evidence="1">
    <location>
        <position position="148"/>
    </location>
    <ligand>
        <name>ATP</name>
        <dbReference type="ChEBI" id="CHEBI:30616"/>
    </ligand>
</feature>
<feature type="binding site" evidence="1">
    <location>
        <position position="149"/>
    </location>
    <ligand>
        <name>ATP</name>
        <dbReference type="ChEBI" id="CHEBI:30616"/>
    </ligand>
</feature>
<sequence>MNEINKIWQKILEIILEKVGESTFELWFSPIKLLDIKNSEAFIEVPNRFFKDWIEDNFPSIISDSFYQITGSQVEVKYIITGKEHETGLIEEKKQVIKKGNLNPKYTFDTFVVGPSNQFAHAASFRVAENPGFAYNPLFIYGGVGLGKTHLITAIGNYILDKKPEMNVCYISSEQFTGEFVSAIRHEKMPEFRNKYRTVDVFLVDDIQFIAGKDSTQEEFFHTFNELYSKQKQIVISSDRPPMEISDITDRLRSRFGMGLIADIQPPEIETRLAILYKKADMEGVKLPEDVAYFIASRVKSNVRELEGSLIKLCAYTSLTKVPISMDVAKYVLRDLLPDENKPITIELIQKAVCEAVGLKIQDIKSKKRTKEISNARKLAMYITKKLTNLSLAEIGNAFGGKDHATVIYACKQVEKEKEKDESISRLIDSIIKKVTGQ</sequence>
<proteinExistence type="inferred from homology"/>